<reference evidence="6" key="1">
    <citation type="journal article" date="2007" name="Genetics">
        <title>The bursicon gene in mosquitoes: an unusual example of mRNA trans-splicing.</title>
        <authorList>
            <person name="Robertson H.M."/>
            <person name="Navik J.A."/>
            <person name="Walden K.K.O."/>
            <person name="Honegger H.-W."/>
        </authorList>
    </citation>
    <scope>CONCEPTUAL TRANSLATION</scope>
    <scope>TRANS-SPLICING</scope>
</reference>
<reference key="2">
    <citation type="journal article" date="2007" name="Science">
        <title>Genome sequence of Aedes aegypti, a major arbovirus vector.</title>
        <authorList>
            <person name="Nene V."/>
            <person name="Wortman J.R."/>
            <person name="Lawson D."/>
            <person name="Haas B.J."/>
            <person name="Kodira C.D."/>
            <person name="Tu Z.J."/>
            <person name="Loftus B.J."/>
            <person name="Xi Z."/>
            <person name="Megy K."/>
            <person name="Grabherr M."/>
            <person name="Ren Q."/>
            <person name="Zdobnov E.M."/>
            <person name="Lobo N.F."/>
            <person name="Campbell K.S."/>
            <person name="Brown S.E."/>
            <person name="Bonaldo M.F."/>
            <person name="Zhu J."/>
            <person name="Sinkins S.P."/>
            <person name="Hogenkamp D.G."/>
            <person name="Amedeo P."/>
            <person name="Arensburger P."/>
            <person name="Atkinson P.W."/>
            <person name="Bidwell S.L."/>
            <person name="Biedler J."/>
            <person name="Birney E."/>
            <person name="Bruggner R.V."/>
            <person name="Costas J."/>
            <person name="Coy M.R."/>
            <person name="Crabtree J."/>
            <person name="Crawford M."/>
            <person name="DeBruyn B."/>
            <person name="DeCaprio D."/>
            <person name="Eiglmeier K."/>
            <person name="Eisenstadt E."/>
            <person name="El-Dorry H."/>
            <person name="Gelbart W.M."/>
            <person name="Gomes S.L."/>
            <person name="Hammond M."/>
            <person name="Hannick L.I."/>
            <person name="Hogan J.R."/>
            <person name="Holmes M.H."/>
            <person name="Jaffe D."/>
            <person name="Johnston S.J."/>
            <person name="Kennedy R.C."/>
            <person name="Koo H."/>
            <person name="Kravitz S."/>
            <person name="Kriventseva E.V."/>
            <person name="Kulp D."/>
            <person name="Labutti K."/>
            <person name="Lee E."/>
            <person name="Li S."/>
            <person name="Lovin D.D."/>
            <person name="Mao C."/>
            <person name="Mauceli E."/>
            <person name="Menck C.F."/>
            <person name="Miller J.R."/>
            <person name="Montgomery P."/>
            <person name="Mori A."/>
            <person name="Nascimento A.L."/>
            <person name="Naveira H.F."/>
            <person name="Nusbaum C."/>
            <person name="O'Leary S.B."/>
            <person name="Orvis J."/>
            <person name="Pertea M."/>
            <person name="Quesneville H."/>
            <person name="Reidenbach K.R."/>
            <person name="Rogers Y.-H.C."/>
            <person name="Roth C.W."/>
            <person name="Schneider J.R."/>
            <person name="Schatz M."/>
            <person name="Shumway M."/>
            <person name="Stanke M."/>
            <person name="Stinson E.O."/>
            <person name="Tubio J.M.C."/>
            <person name="Vanzee J.P."/>
            <person name="Verjovski-Almeida S."/>
            <person name="Werner D."/>
            <person name="White O.R."/>
            <person name="Wyder S."/>
            <person name="Zeng Q."/>
            <person name="Zhao Q."/>
            <person name="Zhao Y."/>
            <person name="Hill C.A."/>
            <person name="Raikhel A.S."/>
            <person name="Soares M.B."/>
            <person name="Knudson D.L."/>
            <person name="Lee N.H."/>
            <person name="Galagan J."/>
            <person name="Salzberg S.L."/>
            <person name="Paulsen I.T."/>
            <person name="Dimopoulos G."/>
            <person name="Collins F.H."/>
            <person name="Bruce B."/>
            <person name="Fraser-Liggett C.M."/>
            <person name="Severson D.W."/>
        </authorList>
    </citation>
    <scope>NUCLEOTIDE SEQUENCE [LARGE SCALE GENOMIC DNA]</scope>
    <source>
        <strain>LVPib12</strain>
    </source>
</reference>
<evidence type="ECO:0000250" key="1">
    <source>
        <dbReference type="UniProtKB" id="Q66Q82"/>
    </source>
</evidence>
<evidence type="ECO:0000250" key="2">
    <source>
        <dbReference type="UniProtKB" id="Q9VD83"/>
    </source>
</evidence>
<evidence type="ECO:0000255" key="3"/>
<evidence type="ECO:0000255" key="4">
    <source>
        <dbReference type="PROSITE-ProRule" id="PRU00039"/>
    </source>
</evidence>
<evidence type="ECO:0000269" key="5">
    <source>
    </source>
</evidence>
<evidence type="ECO:0000305" key="6"/>
<dbReference type="EMBL" id="CH477322">
    <property type="status" value="NOT_ANNOTATED_CDS"/>
    <property type="molecule type" value="Genomic_DNA"/>
</dbReference>
<dbReference type="EMBL" id="CH477412">
    <property type="status" value="NOT_ANNOTATED_CDS"/>
    <property type="molecule type" value="Genomic_DNA"/>
</dbReference>
<dbReference type="FunCoup" id="P85316">
    <property type="interactions" value="6"/>
</dbReference>
<dbReference type="STRING" id="7159.P85316"/>
<dbReference type="VEuPathDB" id="VectorBase:AAEL026321"/>
<dbReference type="InParanoid" id="P85316"/>
<dbReference type="Proteomes" id="UP000008820">
    <property type="component" value="Chromosome 3"/>
</dbReference>
<dbReference type="Proteomes" id="UP000682892">
    <property type="component" value="Unassembled WGS sequence"/>
</dbReference>
<dbReference type="GO" id="GO:0005576">
    <property type="term" value="C:extracellular region"/>
    <property type="evidence" value="ECO:0000250"/>
    <property type="project" value="UniProtKB"/>
</dbReference>
<dbReference type="GO" id="GO:0005615">
    <property type="term" value="C:extracellular space"/>
    <property type="evidence" value="ECO:0007669"/>
    <property type="project" value="TreeGrafter"/>
</dbReference>
<dbReference type="GO" id="GO:0036122">
    <property type="term" value="F:BMP binding"/>
    <property type="evidence" value="ECO:0007669"/>
    <property type="project" value="TreeGrafter"/>
</dbReference>
<dbReference type="GO" id="GO:0005179">
    <property type="term" value="F:hormone activity"/>
    <property type="evidence" value="ECO:0000250"/>
    <property type="project" value="UniProtKB"/>
</dbReference>
<dbReference type="GO" id="GO:0009887">
    <property type="term" value="P:animal organ morphogenesis"/>
    <property type="evidence" value="ECO:0007669"/>
    <property type="project" value="TreeGrafter"/>
</dbReference>
<dbReference type="GO" id="GO:0007593">
    <property type="term" value="P:chitin-based cuticle sclerotization"/>
    <property type="evidence" value="ECO:0000250"/>
    <property type="project" value="UniProtKB"/>
</dbReference>
<dbReference type="GO" id="GO:0048067">
    <property type="term" value="P:cuticle pigmentation"/>
    <property type="evidence" value="ECO:0000250"/>
    <property type="project" value="UniProtKB"/>
</dbReference>
<dbReference type="GO" id="GO:0038098">
    <property type="term" value="P:sequestering of BMP from receptor via BMP binding"/>
    <property type="evidence" value="ECO:0007669"/>
    <property type="project" value="TreeGrafter"/>
</dbReference>
<dbReference type="FunFam" id="2.10.90.10:FF:000054">
    <property type="entry name" value="Bursicon"/>
    <property type="match status" value="1"/>
</dbReference>
<dbReference type="Gene3D" id="2.10.90.10">
    <property type="entry name" value="Cystine-knot cytokines"/>
    <property type="match status" value="1"/>
</dbReference>
<dbReference type="InterPro" id="IPR006207">
    <property type="entry name" value="Cys_knot_C"/>
</dbReference>
<dbReference type="InterPro" id="IPR029034">
    <property type="entry name" value="Cystine-knot_cytokine"/>
</dbReference>
<dbReference type="InterPro" id="IPR004133">
    <property type="entry name" value="DAN"/>
</dbReference>
<dbReference type="PANTHER" id="PTHR15283:SF7">
    <property type="entry name" value="BURSICON"/>
    <property type="match status" value="1"/>
</dbReference>
<dbReference type="PANTHER" id="PTHR15283">
    <property type="entry name" value="GREMLIN 1"/>
    <property type="match status" value="1"/>
</dbReference>
<dbReference type="Pfam" id="PF03045">
    <property type="entry name" value="DAN"/>
    <property type="match status" value="1"/>
</dbReference>
<dbReference type="SMART" id="SM00041">
    <property type="entry name" value="CT"/>
    <property type="match status" value="1"/>
</dbReference>
<dbReference type="PROSITE" id="PS01225">
    <property type="entry name" value="CTCK_2"/>
    <property type="match status" value="1"/>
</dbReference>
<comment type="function">
    <text evidence="2">Final heterodimeric neurohormone released at the end of the molting cycle, involved in the sclerotization (tanning) of the insect cuticle, melanization and wing spreading.</text>
</comment>
<comment type="subunit">
    <text evidence="2">Heterodimer of burs and pburs.</text>
</comment>
<comment type="subcellular location">
    <subcellularLocation>
        <location evidence="2">Secreted</location>
    </subcellularLocation>
</comment>
<comment type="miscellaneous">
    <text evidence="5">The bursicon gene is encoded by two loci: burs124 contains exons 1, 2 and 4, and burs3 contains exon 3. Exon 3 is trans-spliced into position in the mature transcript. This unusual gene arrangement has existed for at least the 150 million years (MY) of mosquito evolution since the split of the culicid and anophelid family lineages, but is younger than the 250 MY split of the dipteran suborders Nematocera and Brachycera (containing the Culicidea and Drosophilidae, respectively).</text>
</comment>
<accession>P85316</accession>
<organism>
    <name type="scientific">Aedes aegypti</name>
    <name type="common">Yellowfever mosquito</name>
    <name type="synonym">Culex aegypti</name>
    <dbReference type="NCBI Taxonomy" id="7159"/>
    <lineage>
        <taxon>Eukaryota</taxon>
        <taxon>Metazoa</taxon>
        <taxon>Ecdysozoa</taxon>
        <taxon>Arthropoda</taxon>
        <taxon>Hexapoda</taxon>
        <taxon>Insecta</taxon>
        <taxon>Pterygota</taxon>
        <taxon>Neoptera</taxon>
        <taxon>Endopterygota</taxon>
        <taxon>Diptera</taxon>
        <taxon>Nematocera</taxon>
        <taxon>Culicoidea</taxon>
        <taxon>Culicidae</taxon>
        <taxon>Culicinae</taxon>
        <taxon>Aedini</taxon>
        <taxon>Aedes</taxon>
        <taxon>Stegomyia</taxon>
    </lineage>
</organism>
<gene>
    <name evidence="1" type="primary">burs124</name>
</gene>
<gene>
    <name evidence="1" type="primary">burs3</name>
</gene>
<proteinExistence type="inferred from homology"/>
<protein>
    <recommendedName>
        <fullName>Bursicon</fullName>
    </recommendedName>
    <alternativeName>
        <fullName>Bursicon subunit alpha</fullName>
    </alternativeName>
</protein>
<sequence length="163" mass="17719">MKSSVCVLLKVLACILLPGGLNAQKESNDDIQHYTADDCQVTPVIHVLQYPGCVPKPIPSFACIGRCASYIQVSGSKIWQMERSCMCCQESGEREASVSLFCPKAKNGEKKFKKVSTKAPLECMCRPCTGIEDANVIPQELAAFADDGSLAGYFQKSQFKAAE</sequence>
<feature type="signal peptide" evidence="3">
    <location>
        <begin position="1"/>
        <end position="23"/>
    </location>
</feature>
<feature type="chain" id="PRO_0000312827" description="Bursicon" evidence="3">
    <location>
        <begin position="24"/>
        <end position="163"/>
    </location>
</feature>
<feature type="domain" description="CTCK" evidence="4">
    <location>
        <begin position="39"/>
        <end position="129"/>
    </location>
</feature>
<feature type="disulfide bond" evidence="4">
    <location>
        <begin position="39"/>
        <end position="88"/>
    </location>
</feature>
<feature type="disulfide bond" evidence="4">
    <location>
        <begin position="53"/>
        <end position="102"/>
    </location>
</feature>
<feature type="disulfide bond" evidence="4">
    <location>
        <begin position="63"/>
        <end position="123"/>
    </location>
</feature>
<feature type="disulfide bond" evidence="4">
    <location>
        <begin position="67"/>
        <end position="125"/>
    </location>
</feature>
<feature type="disulfide bond" evidence="4">
    <location>
        <begin position="85"/>
        <end position="128"/>
    </location>
</feature>
<feature type="disulfide bond" description="Interchain" evidence="4">
    <location>
        <position position="87"/>
    </location>
</feature>
<name>BURS_AEDAE</name>
<keyword id="KW-1015">Disulfide bond</keyword>
<keyword id="KW-0372">Hormone</keyword>
<keyword id="KW-1185">Reference proteome</keyword>
<keyword id="KW-0964">Secreted</keyword>
<keyword id="KW-0732">Signal</keyword>